<comment type="function">
    <text evidence="1">Key assembly factor of SCF (SKP1-CUL1-F-box protein) E3 ubiquitin ligase complexes that promotes the exchange of the substrate-recognition F-box subunit in SCF complexes, thereby playing a key role in the cellular repertoire of SCF complexes. Acts as a F-box protein exchange factor. The exchange activity of CAND1 is coupled with cycles of neddylation conjugation: in the deneddylated state, cullin-binding CAND1 binds CUL1-RBX1, increasing dissociation of the SCF complex and promoting exchange of the F-box protein. Probably plays a similar role in other cullin-RING E3 ubiquitin ligase complexes (By similarity).</text>
</comment>
<comment type="subunit">
    <text evidence="2 3">Interacts with TBP (By similarity). Part of a complex that contains CUL1 and RBX1. Interacts with unneddylated cullins: interacts with CUL1, CUL2, CUL3, CUL4A, CUL4B and CUL5. Does not bind neddylated CUL1. Interaction with cullins is abolished in presence of COMMD1, which antagonizes with CAND1 for interacting with cullins. Interacts with ERCC6 (By similarity). Interacts with DCUN1D1, DCUN1D2, DCUN1D3, DCUN1D4 and DCUN1D5; these interactions are bridged by cullins and strongly inhibits the neddylation of cullins (By similarity).</text>
</comment>
<comment type="subcellular location">
    <subcellularLocation>
        <location evidence="3">Cytoplasm</location>
    </subcellularLocation>
    <subcellularLocation>
        <location evidence="3">Nucleus</location>
    </subcellularLocation>
    <text evidence="3">Predominantly cytoplasmic.</text>
</comment>
<comment type="similarity">
    <text evidence="5">Belongs to the CAND family.</text>
</comment>
<reference key="1">
    <citation type="submission" date="2004-11" db="EMBL/GenBank/DDBJ databases">
        <authorList>
            <consortium name="The German cDNA consortium"/>
        </authorList>
    </citation>
    <scope>NUCLEOTIDE SEQUENCE [LARGE SCALE MRNA]</scope>
    <source>
        <tissue>Brain cortex</tissue>
    </source>
</reference>
<evidence type="ECO:0000250" key="1"/>
<evidence type="ECO:0000250" key="2">
    <source>
        <dbReference type="UniProtKB" id="P97536"/>
    </source>
</evidence>
<evidence type="ECO:0000250" key="3">
    <source>
        <dbReference type="UniProtKB" id="Q86VP6"/>
    </source>
</evidence>
<evidence type="ECO:0000256" key="4">
    <source>
        <dbReference type="SAM" id="MobiDB-lite"/>
    </source>
</evidence>
<evidence type="ECO:0000305" key="5"/>
<dbReference type="EMBL" id="CR860473">
    <property type="protein sequence ID" value="CAH92595.1"/>
    <property type="molecule type" value="mRNA"/>
</dbReference>
<dbReference type="RefSeq" id="NP_001126520.1">
    <property type="nucleotide sequence ID" value="NM_001133048.2"/>
</dbReference>
<dbReference type="SMR" id="Q5R6L5"/>
<dbReference type="STRING" id="9601.ENSPPYP00000005402"/>
<dbReference type="GeneID" id="100173509"/>
<dbReference type="KEGG" id="pon:100173509"/>
<dbReference type="CTD" id="55832"/>
<dbReference type="eggNOG" id="KOG1824">
    <property type="taxonomic scope" value="Eukaryota"/>
</dbReference>
<dbReference type="InParanoid" id="Q5R6L5"/>
<dbReference type="OrthoDB" id="6260732at2759"/>
<dbReference type="Proteomes" id="UP000001595">
    <property type="component" value="Unplaced"/>
</dbReference>
<dbReference type="GO" id="GO:0031461">
    <property type="term" value="C:cullin-RING ubiquitin ligase complex"/>
    <property type="evidence" value="ECO:0000250"/>
    <property type="project" value="UniProtKB"/>
</dbReference>
<dbReference type="GO" id="GO:0005737">
    <property type="term" value="C:cytoplasm"/>
    <property type="evidence" value="ECO:0000250"/>
    <property type="project" value="UniProtKB"/>
</dbReference>
<dbReference type="GO" id="GO:0005634">
    <property type="term" value="C:nucleus"/>
    <property type="evidence" value="ECO:0000250"/>
    <property type="project" value="UniProtKB"/>
</dbReference>
<dbReference type="GO" id="GO:0016567">
    <property type="term" value="P:protein ubiquitination"/>
    <property type="evidence" value="ECO:0000250"/>
    <property type="project" value="UniProtKB"/>
</dbReference>
<dbReference type="GO" id="GO:0010265">
    <property type="term" value="P:SCF complex assembly"/>
    <property type="evidence" value="ECO:0000250"/>
    <property type="project" value="UniProtKB"/>
</dbReference>
<dbReference type="FunFam" id="1.25.10.10:FF:000047">
    <property type="entry name" value="Cullin-associated NEDD8-dissociated protein 1"/>
    <property type="match status" value="1"/>
</dbReference>
<dbReference type="Gene3D" id="1.25.10.10">
    <property type="entry name" value="Leucine-rich Repeat Variant"/>
    <property type="match status" value="1"/>
</dbReference>
<dbReference type="InterPro" id="IPR011989">
    <property type="entry name" value="ARM-like"/>
</dbReference>
<dbReference type="InterPro" id="IPR016024">
    <property type="entry name" value="ARM-type_fold"/>
</dbReference>
<dbReference type="InterPro" id="IPR039852">
    <property type="entry name" value="CAND1/CAND2"/>
</dbReference>
<dbReference type="InterPro" id="IPR013932">
    <property type="entry name" value="TATA-bd_TIP120"/>
</dbReference>
<dbReference type="PANTHER" id="PTHR12696">
    <property type="entry name" value="TIP120"/>
    <property type="match status" value="1"/>
</dbReference>
<dbReference type="Pfam" id="PF13513">
    <property type="entry name" value="HEAT_EZ"/>
    <property type="match status" value="1"/>
</dbReference>
<dbReference type="Pfam" id="PF08623">
    <property type="entry name" value="TIP120"/>
    <property type="match status" value="1"/>
</dbReference>
<dbReference type="SUPFAM" id="SSF48371">
    <property type="entry name" value="ARM repeat"/>
    <property type="match status" value="1"/>
</dbReference>
<accession>Q5R6L5</accession>
<sequence>MASASYHISNLLEKMTSSGKDFRFMATNDLMTELQKDSIKLDDDSERKVVKMILKLQEDKNGEVQNLAVKCLGPLVSKVKEYQVETIVDTLCTNMLSDKEQLRDISSIGLKTVIGELPPASSGSALAANVCKKITGRLTSAIAKQEDVSVQLEALDIMADMLSRQGGLLVNFHPSILTCLLPQLTSPRLAVRKRTIIALGHLVMSCGNIVFVGLIEHLLSELSKNDSMSTTRTYIQCIAAISRQAGHRIGEYLEKIIPLVVKFCNVDDDELREYCIQAFESFVRRCPKEVYPHVSTIINICLKYLTYDPNYNYDDEDEDENAMDADGGDDDDQGSDDEYSDDGDMSWKVRRAAAKCLDAVVSTRHEMLPEFYKTVSPALISRFKEREENVKADVFHAYLSLLKQTRPVQSWLCDPDAMEQGETPLTMLQSQVPNIVKALHKQMKEKSVKTRQCCFNMLTELVNVLPGALTQHIPVLVPGIIFSLNDESSSSNLKIDALSCLYVILCNHSPQVFHPHVQALVPPVVACVGDPFYKITSEALLVTQQLVKVIRPLDQPSSFDATPYIKDVFTCTIKRLKAADIDQDVKERAISCMGQIICNLGDNLGSDLPNTLQIFLERLKNEITRLTTVKALTLIAGSPLKIDLRPVLGEGVPILASFLRKNQRALKLGTLSALDILIKNYSDSLTAAMIDAVLDELPPLISESDMHVSQMAISFLTTLAKVYPSSLSKISGSILNELIGLVRSPLLQGGALSAMLDFFQALVVTGTNNLGYMDLLRMLTGPVYSQSTALTHKQSYYSIAKCVAALTRACPKEGPAVVGQFIQDVKNSRSTDSIRLLALLSLGEVGHHIDLSGQLELKSVILEAFSSPSEEVKSAASYALGSISVGNLPEYLPFVLQEITSQPKRQYLLLHSLKEIISSASVVGLKPYVENIWALLLKHCECAEEGTRNVVAECLGKLTLIDPETLLPRLKGYLISGSSYARSSVVTAVKFTISDHPQPIDPLLKNCIGDFLKTLEDPDLNVRRVALVTFNSAAHNKPSLIRDLLDTVLPHLYNETKVRKELIREVEMGPFKHTVDDGLDIRKAAFECMYTLLDSCLDRLDIFEFLNHVEDGLKDHYDIKMLTFLMLVRLSTLCPSAVLQRLDRLVEPLRATCTTKVKANSVKQEFEKQDELKRSAMRAVAALLTIPEAEKSPLMSEFQSQISSNPELAAIFESIQKDSSSTNLESMDTS</sequence>
<feature type="initiator methionine" description="Removed" evidence="3">
    <location>
        <position position="1"/>
    </location>
</feature>
<feature type="chain" id="PRO_0000089295" description="Cullin-associated NEDD8-dissociated protein 1">
    <location>
        <begin position="2"/>
        <end position="1230"/>
    </location>
</feature>
<feature type="repeat" description="HEAT 1">
    <location>
        <begin position="2"/>
        <end position="39"/>
    </location>
</feature>
<feature type="repeat" description="HEAT 2">
    <location>
        <begin position="44"/>
        <end position="81"/>
    </location>
</feature>
<feature type="repeat" description="HEAT 3">
    <location>
        <begin position="83"/>
        <end position="119"/>
    </location>
</feature>
<feature type="repeat" description="HEAT 4">
    <location>
        <begin position="131"/>
        <end position="165"/>
    </location>
</feature>
<feature type="repeat" description="HEAT 5">
    <location>
        <begin position="171"/>
        <end position="208"/>
    </location>
</feature>
<feature type="repeat" description="HEAT 6">
    <location>
        <begin position="210"/>
        <end position="247"/>
    </location>
</feature>
<feature type="repeat" description="HEAT 7">
    <location>
        <begin position="248"/>
        <end position="282"/>
    </location>
</feature>
<feature type="repeat" description="HEAT 8">
    <location>
        <begin position="289"/>
        <end position="366"/>
    </location>
</feature>
<feature type="repeat" description="HEAT 9">
    <location>
        <begin position="370"/>
        <end position="407"/>
    </location>
</feature>
<feature type="repeat" description="HEAT 10">
    <location>
        <begin position="424"/>
        <end position="467"/>
    </location>
</feature>
<feature type="repeat" description="HEAT 11">
    <location>
        <begin position="471"/>
        <end position="510"/>
    </location>
</feature>
<feature type="repeat" description="HEAT 12">
    <location>
        <begin position="515"/>
        <end position="552"/>
    </location>
</feature>
<feature type="repeat" description="HEAT 13">
    <location>
        <begin position="563"/>
        <end position="602"/>
    </location>
</feature>
<feature type="repeat" description="HEAT 14">
    <location>
        <begin position="606"/>
        <end position="643"/>
    </location>
</feature>
<feature type="repeat" description="HEAT 15">
    <location>
        <begin position="646"/>
        <end position="683"/>
    </location>
</feature>
<feature type="repeat" description="HEAT 16">
    <location>
        <begin position="688"/>
        <end position="725"/>
    </location>
</feature>
<feature type="repeat" description="HEAT 17">
    <location>
        <begin position="729"/>
        <end position="768"/>
    </location>
</feature>
<feature type="repeat" description="HEAT 18">
    <location>
        <begin position="770"/>
        <end position="808"/>
    </location>
</feature>
<feature type="repeat" description="HEAT 19">
    <location>
        <begin position="809"/>
        <end position="845"/>
    </location>
</feature>
<feature type="repeat" description="HEAT 20">
    <location>
        <begin position="852"/>
        <end position="889"/>
    </location>
</feature>
<feature type="repeat" description="HEAT 21">
    <location>
        <begin position="890"/>
        <end position="927"/>
    </location>
</feature>
<feature type="repeat" description="HEAT 22">
    <location>
        <begin position="928"/>
        <end position="960"/>
    </location>
</feature>
<feature type="repeat" description="HEAT 23">
    <location>
        <begin position="961"/>
        <end position="998"/>
    </location>
</feature>
<feature type="repeat" description="HEAT 24">
    <location>
        <begin position="1002"/>
        <end position="1039"/>
    </location>
</feature>
<feature type="repeat" description="HEAT 25">
    <location>
        <begin position="1043"/>
        <end position="1097"/>
    </location>
</feature>
<feature type="repeat" description="HEAT 26">
    <location>
        <begin position="1099"/>
        <end position="1133"/>
    </location>
</feature>
<feature type="repeat" description="HEAT 27">
    <location>
        <begin position="1140"/>
        <end position="1189"/>
    </location>
</feature>
<feature type="region of interest" description="Disordered" evidence="4">
    <location>
        <begin position="315"/>
        <end position="343"/>
    </location>
</feature>
<feature type="modified residue" description="N-acetylalanine" evidence="3">
    <location>
        <position position="2"/>
    </location>
</feature>
<feature type="modified residue" description="N6-acetyllysine" evidence="3">
    <location>
        <position position="55"/>
    </location>
</feature>
<feature type="modified residue" description="Phosphoserine" evidence="3">
    <location>
        <position position="335"/>
    </location>
</feature>
<feature type="modified residue" description="Phosphoserine" evidence="3">
    <location>
        <position position="558"/>
    </location>
</feature>
<feature type="modified residue" description="N6-acetyllysine" evidence="3">
    <location>
        <position position="971"/>
    </location>
</feature>
<gene>
    <name type="primary">CAND1</name>
</gene>
<name>CAND1_PONAB</name>
<proteinExistence type="evidence at transcript level"/>
<organism>
    <name type="scientific">Pongo abelii</name>
    <name type="common">Sumatran orangutan</name>
    <name type="synonym">Pongo pygmaeus abelii</name>
    <dbReference type="NCBI Taxonomy" id="9601"/>
    <lineage>
        <taxon>Eukaryota</taxon>
        <taxon>Metazoa</taxon>
        <taxon>Chordata</taxon>
        <taxon>Craniata</taxon>
        <taxon>Vertebrata</taxon>
        <taxon>Euteleostomi</taxon>
        <taxon>Mammalia</taxon>
        <taxon>Eutheria</taxon>
        <taxon>Euarchontoglires</taxon>
        <taxon>Primates</taxon>
        <taxon>Haplorrhini</taxon>
        <taxon>Catarrhini</taxon>
        <taxon>Hominidae</taxon>
        <taxon>Pongo</taxon>
    </lineage>
</organism>
<keyword id="KW-0007">Acetylation</keyword>
<keyword id="KW-0963">Cytoplasm</keyword>
<keyword id="KW-0539">Nucleus</keyword>
<keyword id="KW-0597">Phosphoprotein</keyword>
<keyword id="KW-1185">Reference proteome</keyword>
<keyword id="KW-0677">Repeat</keyword>
<keyword id="KW-0833">Ubl conjugation pathway</keyword>
<protein>
    <recommendedName>
        <fullName>Cullin-associated NEDD8-dissociated protein 1</fullName>
    </recommendedName>
    <alternativeName>
        <fullName>Cullin-associated and neddylation-dissociated protein 1</fullName>
    </alternativeName>
    <alternativeName>
        <fullName>p120 CAND1</fullName>
    </alternativeName>
</protein>